<evidence type="ECO:0000255" key="1">
    <source>
        <dbReference type="HAMAP-Rule" id="MF_00080"/>
    </source>
</evidence>
<evidence type="ECO:0000256" key="2">
    <source>
        <dbReference type="SAM" id="MobiDB-lite"/>
    </source>
</evidence>
<organism>
    <name type="scientific">Mesorhizobium japonicum (strain LMG 29417 / CECT 9101 / MAFF 303099)</name>
    <name type="common">Mesorhizobium loti (strain MAFF 303099)</name>
    <dbReference type="NCBI Taxonomy" id="266835"/>
    <lineage>
        <taxon>Bacteria</taxon>
        <taxon>Pseudomonadati</taxon>
        <taxon>Pseudomonadota</taxon>
        <taxon>Alphaproteobacteria</taxon>
        <taxon>Hyphomicrobiales</taxon>
        <taxon>Phyllobacteriaceae</taxon>
        <taxon>Mesorhizobium</taxon>
    </lineage>
</organism>
<name>IF3_RHILO</name>
<feature type="chain" id="PRO_0000177563" description="Translation initiation factor IF-3">
    <location>
        <begin position="1"/>
        <end position="178"/>
    </location>
</feature>
<feature type="region of interest" description="Disordered" evidence="2">
    <location>
        <begin position="1"/>
        <end position="20"/>
    </location>
</feature>
<dbReference type="EMBL" id="BA000012">
    <property type="protein sequence ID" value="BAB51576.1"/>
    <property type="molecule type" value="Genomic_DNA"/>
</dbReference>
<dbReference type="RefSeq" id="WP_010912915.1">
    <property type="nucleotide sequence ID" value="NC_002678.2"/>
</dbReference>
<dbReference type="SMR" id="Q98CP5"/>
<dbReference type="GeneID" id="66680721"/>
<dbReference type="KEGG" id="mlo:mll5061"/>
<dbReference type="eggNOG" id="COG0290">
    <property type="taxonomic scope" value="Bacteria"/>
</dbReference>
<dbReference type="HOGENOM" id="CLU_054919_3_2_5"/>
<dbReference type="Proteomes" id="UP000000552">
    <property type="component" value="Chromosome"/>
</dbReference>
<dbReference type="GO" id="GO:0005829">
    <property type="term" value="C:cytosol"/>
    <property type="evidence" value="ECO:0007669"/>
    <property type="project" value="TreeGrafter"/>
</dbReference>
<dbReference type="GO" id="GO:0016020">
    <property type="term" value="C:membrane"/>
    <property type="evidence" value="ECO:0007669"/>
    <property type="project" value="TreeGrafter"/>
</dbReference>
<dbReference type="GO" id="GO:0043022">
    <property type="term" value="F:ribosome binding"/>
    <property type="evidence" value="ECO:0007669"/>
    <property type="project" value="TreeGrafter"/>
</dbReference>
<dbReference type="GO" id="GO:0003743">
    <property type="term" value="F:translation initiation factor activity"/>
    <property type="evidence" value="ECO:0007669"/>
    <property type="project" value="UniProtKB-UniRule"/>
</dbReference>
<dbReference type="GO" id="GO:0032790">
    <property type="term" value="P:ribosome disassembly"/>
    <property type="evidence" value="ECO:0007669"/>
    <property type="project" value="TreeGrafter"/>
</dbReference>
<dbReference type="FunFam" id="3.30.110.10:FF:000001">
    <property type="entry name" value="Translation initiation factor IF-3"/>
    <property type="match status" value="1"/>
</dbReference>
<dbReference type="Gene3D" id="3.30.110.10">
    <property type="entry name" value="Translation initiation factor 3 (IF-3), C-terminal domain"/>
    <property type="match status" value="1"/>
</dbReference>
<dbReference type="Gene3D" id="3.10.20.80">
    <property type="entry name" value="Translation initiation factor 3 (IF-3), N-terminal domain"/>
    <property type="match status" value="1"/>
</dbReference>
<dbReference type="HAMAP" id="MF_00080">
    <property type="entry name" value="IF_3"/>
    <property type="match status" value="1"/>
</dbReference>
<dbReference type="InterPro" id="IPR036788">
    <property type="entry name" value="T_IF-3_C_sf"/>
</dbReference>
<dbReference type="InterPro" id="IPR036787">
    <property type="entry name" value="T_IF-3_N_sf"/>
</dbReference>
<dbReference type="InterPro" id="IPR001288">
    <property type="entry name" value="Translation_initiation_fac_3"/>
</dbReference>
<dbReference type="InterPro" id="IPR019815">
    <property type="entry name" value="Translation_initiation_fac_3_C"/>
</dbReference>
<dbReference type="InterPro" id="IPR019814">
    <property type="entry name" value="Translation_initiation_fac_3_N"/>
</dbReference>
<dbReference type="NCBIfam" id="TIGR00168">
    <property type="entry name" value="infC"/>
    <property type="match status" value="1"/>
</dbReference>
<dbReference type="PANTHER" id="PTHR10938">
    <property type="entry name" value="TRANSLATION INITIATION FACTOR IF-3"/>
    <property type="match status" value="1"/>
</dbReference>
<dbReference type="PANTHER" id="PTHR10938:SF0">
    <property type="entry name" value="TRANSLATION INITIATION FACTOR IF-3, MITOCHONDRIAL"/>
    <property type="match status" value="1"/>
</dbReference>
<dbReference type="Pfam" id="PF00707">
    <property type="entry name" value="IF3_C"/>
    <property type="match status" value="1"/>
</dbReference>
<dbReference type="Pfam" id="PF05198">
    <property type="entry name" value="IF3_N"/>
    <property type="match status" value="1"/>
</dbReference>
<dbReference type="SUPFAM" id="SSF55200">
    <property type="entry name" value="Translation initiation factor IF3, C-terminal domain"/>
    <property type="match status" value="1"/>
</dbReference>
<dbReference type="SUPFAM" id="SSF54364">
    <property type="entry name" value="Translation initiation factor IF3, N-terminal domain"/>
    <property type="match status" value="1"/>
</dbReference>
<sequence length="178" mass="20225">MRRPFKAAAPTKDGPRSNRDIRVPRVQLIDAEGQNRGDVSINDALLLAEEAGLDLVEISPNAVPPVVKILDLGKLKYANQKKAAEARKNQKVIEIKEIKMRPNIDSHDYETKMKAVRRFFEEGDKVKLTLRFRGREMAHMELGMQLLNKVREEVATIAKVEAEPKLEGRQMMMVLAPR</sequence>
<comment type="function">
    <text evidence="1">IF-3 binds to the 30S ribosomal subunit and shifts the equilibrium between 70S ribosomes and their 50S and 30S subunits in favor of the free subunits, thus enhancing the availability of 30S subunits on which protein synthesis initiation begins.</text>
</comment>
<comment type="subunit">
    <text evidence="1">Monomer.</text>
</comment>
<comment type="subcellular location">
    <subcellularLocation>
        <location evidence="1">Cytoplasm</location>
    </subcellularLocation>
</comment>
<comment type="similarity">
    <text evidence="1">Belongs to the IF-3 family.</text>
</comment>
<accession>Q98CP5</accession>
<gene>
    <name evidence="1" type="primary">infC</name>
    <name type="ordered locus">mll5061</name>
</gene>
<reference key="1">
    <citation type="journal article" date="2000" name="DNA Res.">
        <title>Complete genome structure of the nitrogen-fixing symbiotic bacterium Mesorhizobium loti.</title>
        <authorList>
            <person name="Kaneko T."/>
            <person name="Nakamura Y."/>
            <person name="Sato S."/>
            <person name="Asamizu E."/>
            <person name="Kato T."/>
            <person name="Sasamoto S."/>
            <person name="Watanabe A."/>
            <person name="Idesawa K."/>
            <person name="Ishikawa A."/>
            <person name="Kawashima K."/>
            <person name="Kimura T."/>
            <person name="Kishida Y."/>
            <person name="Kiyokawa C."/>
            <person name="Kohara M."/>
            <person name="Matsumoto M."/>
            <person name="Matsuno A."/>
            <person name="Mochizuki Y."/>
            <person name="Nakayama S."/>
            <person name="Nakazaki N."/>
            <person name="Shimpo S."/>
            <person name="Sugimoto M."/>
            <person name="Takeuchi C."/>
            <person name="Yamada M."/>
            <person name="Tabata S."/>
        </authorList>
    </citation>
    <scope>NUCLEOTIDE SEQUENCE [LARGE SCALE GENOMIC DNA]</scope>
    <source>
        <strain>LMG 29417 / CECT 9101 / MAFF 303099</strain>
    </source>
</reference>
<keyword id="KW-0963">Cytoplasm</keyword>
<keyword id="KW-0396">Initiation factor</keyword>
<keyword id="KW-0648">Protein biosynthesis</keyword>
<proteinExistence type="inferred from homology"/>
<protein>
    <recommendedName>
        <fullName evidence="1">Translation initiation factor IF-3</fullName>
    </recommendedName>
</protein>